<name>HFQ_BRUA1</name>
<gene>
    <name evidence="1" type="primary">hfq</name>
    <name type="ordered locus">BAbS19_I10530</name>
</gene>
<dbReference type="EMBL" id="CP000887">
    <property type="protein sequence ID" value="ACD72560.1"/>
    <property type="molecule type" value="Genomic_DNA"/>
</dbReference>
<dbReference type="RefSeq" id="WP_002964239.1">
    <property type="nucleotide sequence ID" value="NC_010742.1"/>
</dbReference>
<dbReference type="SMR" id="B2S5W3"/>
<dbReference type="GeneID" id="97533634"/>
<dbReference type="KEGG" id="bmc:BAbS19_I10530"/>
<dbReference type="HOGENOM" id="CLU_113688_0_0_5"/>
<dbReference type="Proteomes" id="UP000002565">
    <property type="component" value="Chromosome 1"/>
</dbReference>
<dbReference type="GO" id="GO:0005829">
    <property type="term" value="C:cytosol"/>
    <property type="evidence" value="ECO:0007669"/>
    <property type="project" value="TreeGrafter"/>
</dbReference>
<dbReference type="GO" id="GO:0003723">
    <property type="term" value="F:RNA binding"/>
    <property type="evidence" value="ECO:0007669"/>
    <property type="project" value="UniProtKB-UniRule"/>
</dbReference>
<dbReference type="GO" id="GO:0006355">
    <property type="term" value="P:regulation of DNA-templated transcription"/>
    <property type="evidence" value="ECO:0007669"/>
    <property type="project" value="InterPro"/>
</dbReference>
<dbReference type="GO" id="GO:0043487">
    <property type="term" value="P:regulation of RNA stability"/>
    <property type="evidence" value="ECO:0007669"/>
    <property type="project" value="TreeGrafter"/>
</dbReference>
<dbReference type="GO" id="GO:0045974">
    <property type="term" value="P:regulation of translation, ncRNA-mediated"/>
    <property type="evidence" value="ECO:0007669"/>
    <property type="project" value="TreeGrafter"/>
</dbReference>
<dbReference type="CDD" id="cd01716">
    <property type="entry name" value="Hfq"/>
    <property type="match status" value="1"/>
</dbReference>
<dbReference type="Gene3D" id="2.30.30.100">
    <property type="match status" value="1"/>
</dbReference>
<dbReference type="HAMAP" id="MF_00436">
    <property type="entry name" value="Hfq"/>
    <property type="match status" value="1"/>
</dbReference>
<dbReference type="InterPro" id="IPR005001">
    <property type="entry name" value="Hfq"/>
</dbReference>
<dbReference type="InterPro" id="IPR010920">
    <property type="entry name" value="LSM_dom_sf"/>
</dbReference>
<dbReference type="InterPro" id="IPR047575">
    <property type="entry name" value="Sm"/>
</dbReference>
<dbReference type="NCBIfam" id="TIGR02383">
    <property type="entry name" value="Hfq"/>
    <property type="match status" value="1"/>
</dbReference>
<dbReference type="NCBIfam" id="NF001602">
    <property type="entry name" value="PRK00395.1"/>
    <property type="match status" value="1"/>
</dbReference>
<dbReference type="PANTHER" id="PTHR34772">
    <property type="entry name" value="RNA-BINDING PROTEIN HFQ"/>
    <property type="match status" value="1"/>
</dbReference>
<dbReference type="PANTHER" id="PTHR34772:SF1">
    <property type="entry name" value="RNA-BINDING PROTEIN HFQ"/>
    <property type="match status" value="1"/>
</dbReference>
<dbReference type="Pfam" id="PF17209">
    <property type="entry name" value="Hfq"/>
    <property type="match status" value="1"/>
</dbReference>
<dbReference type="SUPFAM" id="SSF50182">
    <property type="entry name" value="Sm-like ribonucleoproteins"/>
    <property type="match status" value="1"/>
</dbReference>
<dbReference type="PROSITE" id="PS52002">
    <property type="entry name" value="SM"/>
    <property type="match status" value="1"/>
</dbReference>
<comment type="function">
    <text evidence="1">RNA chaperone that binds small regulatory RNA (sRNAs) and mRNAs to facilitate mRNA translational regulation in response to envelope stress, environmental stress and changes in metabolite concentrations. Also binds with high specificity to tRNAs.</text>
</comment>
<comment type="subunit">
    <text evidence="1">Homohexamer.</text>
</comment>
<comment type="similarity">
    <text evidence="1">Belongs to the Hfq family.</text>
</comment>
<feature type="chain" id="PRO_1000190309" description="RNA-binding protein Hfq">
    <location>
        <begin position="1"/>
        <end position="78"/>
    </location>
</feature>
<feature type="domain" description="Sm" evidence="2">
    <location>
        <begin position="10"/>
        <end position="70"/>
    </location>
</feature>
<accession>B2S5W3</accession>
<keyword id="KW-0694">RNA-binding</keyword>
<keyword id="KW-0346">Stress response</keyword>
<proteinExistence type="inferred from homology"/>
<reference key="1">
    <citation type="journal article" date="2008" name="PLoS ONE">
        <title>Genome sequence of Brucella abortus vaccine strain S19 compared to virulent strains yields candidate virulence genes.</title>
        <authorList>
            <person name="Crasta O.R."/>
            <person name="Folkerts O."/>
            <person name="Fei Z."/>
            <person name="Mane S.P."/>
            <person name="Evans C."/>
            <person name="Martino-Catt S."/>
            <person name="Bricker B."/>
            <person name="Yu G."/>
            <person name="Du L."/>
            <person name="Sobral B.W."/>
        </authorList>
    </citation>
    <scope>NUCLEOTIDE SEQUENCE [LARGE SCALE GENOMIC DNA]</scope>
    <source>
        <strain>S19</strain>
    </source>
</reference>
<organism>
    <name type="scientific">Brucella abortus (strain S19)</name>
    <dbReference type="NCBI Taxonomy" id="430066"/>
    <lineage>
        <taxon>Bacteria</taxon>
        <taxon>Pseudomonadati</taxon>
        <taxon>Pseudomonadota</taxon>
        <taxon>Alphaproteobacteria</taxon>
        <taxon>Hyphomicrobiales</taxon>
        <taxon>Brucellaceae</taxon>
        <taxon>Brucella/Ochrobactrum group</taxon>
        <taxon>Brucella</taxon>
    </lineage>
</organism>
<protein>
    <recommendedName>
        <fullName evidence="1">RNA-binding protein Hfq</fullName>
    </recommendedName>
</protein>
<evidence type="ECO:0000255" key="1">
    <source>
        <dbReference type="HAMAP-Rule" id="MF_00436"/>
    </source>
</evidence>
<evidence type="ECO:0000255" key="2">
    <source>
        <dbReference type="PROSITE-ProRule" id="PRU01346"/>
    </source>
</evidence>
<sequence length="78" mass="8854">MAERSQNLQDLFLNSVRKQKISLTIFLINGVKLTGIVTSFDNFCVLLRRDGHSQLVYKHAISTIMPSQPVQMFEGEEA</sequence>